<protein>
    <recommendedName>
        <fullName evidence="4">Inhibitory synaptic factor 1</fullName>
        <shortName evidence="1">InSyn1</shortName>
    </recommendedName>
</protein>
<sequence length="291" mass="31654">MNIRGAPDLGQPSDDPNSGGERERIRQRMKMVIGQLEGILRELKEVAKELREVVSQIDKLTSDFDFELEPDDWTTATVSSTSSSDKAGAGGPFDLGHLDFMTADILSDSWEFCSFLDVSTPSDSVDGPEAPRPGTGPDYQLMNGGLPIPNGPRVETPDSSSEEAFSAGPAKGQVPQRTPGTRERVRFSDKVLYHALCCDDEEGDGEEVEEEEAGLAPELPRVEPHTGPLKPSPAPYKTKRSPLTTRRLGPTLAPEQTRRVTRNSSTQTVSDKSTQTVLPYTATKQKAKGKN</sequence>
<proteinExistence type="evidence at transcript level"/>
<comment type="function">
    <text evidence="1">Component of the protein machinery at the inhibitory synapses, probably acting as a scaffold. Inhibitory synapses dampen neuronal activity through postsynaptic hyperpolarization. This synaptic inhibition is fundamental for the functioning of the central nervous system, shaping and orchestrating the flow of information through neuronal networks to generate a precise neural code.</text>
</comment>
<comment type="subunit">
    <text evidence="1">Interacts with GPHN.</text>
</comment>
<comment type="subcellular location">
    <subcellularLocation>
        <location evidence="1">Postsynaptic density</location>
    </subcellularLocation>
</comment>
<comment type="similarity">
    <text evidence="4">Belongs to the INSYN1 family.</text>
</comment>
<gene>
    <name type="primary">Insyn1</name>
</gene>
<name>INSY1_RAT</name>
<feature type="chain" id="PRO_0000337047" description="Inhibitory synaptic factor 1">
    <location>
        <begin position="1"/>
        <end position="291"/>
    </location>
</feature>
<feature type="region of interest" description="Disordered" evidence="3">
    <location>
        <begin position="1"/>
        <end position="25"/>
    </location>
</feature>
<feature type="region of interest" description="Disordered" evidence="3">
    <location>
        <begin position="120"/>
        <end position="186"/>
    </location>
</feature>
<feature type="region of interest" description="Disordered" evidence="3">
    <location>
        <begin position="201"/>
        <end position="291"/>
    </location>
</feature>
<feature type="coiled-coil region" evidence="2">
    <location>
        <begin position="30"/>
        <end position="63"/>
    </location>
</feature>
<feature type="compositionally biased region" description="Acidic residues" evidence="3">
    <location>
        <begin position="201"/>
        <end position="213"/>
    </location>
</feature>
<feature type="compositionally biased region" description="Polar residues" evidence="3">
    <location>
        <begin position="262"/>
        <end position="284"/>
    </location>
</feature>
<evidence type="ECO:0000250" key="1">
    <source>
        <dbReference type="UniProtKB" id="Q8CD60"/>
    </source>
</evidence>
<evidence type="ECO:0000255" key="2"/>
<evidence type="ECO:0000256" key="3">
    <source>
        <dbReference type="SAM" id="MobiDB-lite"/>
    </source>
</evidence>
<evidence type="ECO:0000305" key="4"/>
<accession>B0BN13</accession>
<keyword id="KW-0175">Coiled coil</keyword>
<keyword id="KW-1185">Reference proteome</keyword>
<keyword id="KW-0770">Synapse</keyword>
<reference key="1">
    <citation type="journal article" date="2004" name="Genome Res.">
        <title>The status, quality, and expansion of the NIH full-length cDNA project: the Mammalian Gene Collection (MGC).</title>
        <authorList>
            <consortium name="The MGC Project Team"/>
        </authorList>
    </citation>
    <scope>NUCLEOTIDE SEQUENCE [LARGE SCALE MRNA]</scope>
    <source>
        <tissue>Brain</tissue>
    </source>
</reference>
<dbReference type="EMBL" id="BC158644">
    <property type="protein sequence ID" value="AAI58645.1"/>
    <property type="molecule type" value="mRNA"/>
</dbReference>
<dbReference type="RefSeq" id="NP_001107263.1">
    <property type="nucleotide sequence ID" value="NM_001113791.1"/>
</dbReference>
<dbReference type="SMR" id="B0BN13"/>
<dbReference type="FunCoup" id="B0BN13">
    <property type="interactions" value="638"/>
</dbReference>
<dbReference type="STRING" id="10116.ENSRNOP00000031920"/>
<dbReference type="PhosphoSitePlus" id="B0BN13"/>
<dbReference type="PaxDb" id="10116-ENSRNOP00000031920"/>
<dbReference type="Ensembl" id="ENSRNOT00000116428.1">
    <property type="protein sequence ID" value="ENSRNOP00000090146.1"/>
    <property type="gene ID" value="ENSRNOG00000068374.1"/>
</dbReference>
<dbReference type="GeneID" id="501007"/>
<dbReference type="KEGG" id="rno:501007"/>
<dbReference type="UCSC" id="RGD:1562618">
    <property type="organism name" value="rat"/>
</dbReference>
<dbReference type="AGR" id="RGD:1562618"/>
<dbReference type="CTD" id="388135"/>
<dbReference type="RGD" id="1562618">
    <property type="gene designation" value="Insyn1"/>
</dbReference>
<dbReference type="eggNOG" id="ENOG502R2SS">
    <property type="taxonomic scope" value="Eukaryota"/>
</dbReference>
<dbReference type="GeneTree" id="ENSGT00910000144204"/>
<dbReference type="HOGENOM" id="CLU_073752_1_0_1"/>
<dbReference type="InParanoid" id="B0BN13"/>
<dbReference type="OMA" id="HSLLYNC"/>
<dbReference type="OrthoDB" id="9946710at2759"/>
<dbReference type="PhylomeDB" id="B0BN13"/>
<dbReference type="TreeFam" id="TF332382"/>
<dbReference type="PRO" id="PR:B0BN13"/>
<dbReference type="Proteomes" id="UP000002494">
    <property type="component" value="Chromosome 8"/>
</dbReference>
<dbReference type="Bgee" id="ENSRNOG00000026238">
    <property type="expression patterns" value="Expressed in frontal cortex and 18 other cell types or tissues"/>
</dbReference>
<dbReference type="GO" id="GO:0098982">
    <property type="term" value="C:GABA-ergic synapse"/>
    <property type="evidence" value="ECO:0000266"/>
    <property type="project" value="RGD"/>
</dbReference>
<dbReference type="GO" id="GO:0014069">
    <property type="term" value="C:postsynaptic density"/>
    <property type="evidence" value="ECO:0000250"/>
    <property type="project" value="UniProtKB"/>
</dbReference>
<dbReference type="GO" id="GO:0099572">
    <property type="term" value="C:postsynaptic specialization"/>
    <property type="evidence" value="ECO:0000266"/>
    <property type="project" value="RGD"/>
</dbReference>
<dbReference type="GO" id="GO:0099565">
    <property type="term" value="P:chemical synaptic transmission, postsynaptic"/>
    <property type="evidence" value="ECO:0000266"/>
    <property type="project" value="RGD"/>
</dbReference>
<dbReference type="GO" id="GO:0060080">
    <property type="term" value="P:inhibitory postsynaptic potential"/>
    <property type="evidence" value="ECO:0000250"/>
    <property type="project" value="UniProtKB"/>
</dbReference>
<dbReference type="GO" id="GO:0099084">
    <property type="term" value="P:postsynaptic specialization organization"/>
    <property type="evidence" value="ECO:0000266"/>
    <property type="project" value="RGD"/>
</dbReference>
<dbReference type="InterPro" id="IPR027997">
    <property type="entry name" value="Largen/INSYN1"/>
</dbReference>
<dbReference type="PANTHER" id="PTHR15917">
    <property type="match status" value="1"/>
</dbReference>
<dbReference type="PANTHER" id="PTHR15917:SF3">
    <property type="entry name" value="INHIBITORY SYNAPTIC FACTOR 1"/>
    <property type="match status" value="1"/>
</dbReference>
<dbReference type="Pfam" id="PF15252">
    <property type="entry name" value="DUF4589"/>
    <property type="match status" value="1"/>
</dbReference>
<organism>
    <name type="scientific">Rattus norvegicus</name>
    <name type="common">Rat</name>
    <dbReference type="NCBI Taxonomy" id="10116"/>
    <lineage>
        <taxon>Eukaryota</taxon>
        <taxon>Metazoa</taxon>
        <taxon>Chordata</taxon>
        <taxon>Craniata</taxon>
        <taxon>Vertebrata</taxon>
        <taxon>Euteleostomi</taxon>
        <taxon>Mammalia</taxon>
        <taxon>Eutheria</taxon>
        <taxon>Euarchontoglires</taxon>
        <taxon>Glires</taxon>
        <taxon>Rodentia</taxon>
        <taxon>Myomorpha</taxon>
        <taxon>Muroidea</taxon>
        <taxon>Muridae</taxon>
        <taxon>Murinae</taxon>
        <taxon>Rattus</taxon>
    </lineage>
</organism>